<keyword id="KW-0028">Amino-acid biosynthesis</keyword>
<keyword id="KW-0057">Aromatic amino acid biosynthesis</keyword>
<keyword id="KW-0456">Lyase</keyword>
<keyword id="KW-0663">Pyridoxal phosphate</keyword>
<keyword id="KW-0822">Tryptophan biosynthesis</keyword>
<dbReference type="EC" id="4.2.1.20" evidence="1"/>
<dbReference type="EMBL" id="FM177140">
    <property type="protein sequence ID" value="CAQ65205.1"/>
    <property type="molecule type" value="Genomic_DNA"/>
</dbReference>
<dbReference type="SMR" id="B3W6W6"/>
<dbReference type="KEGG" id="lcb:LCABL_00730"/>
<dbReference type="HOGENOM" id="CLU_016734_3_1_9"/>
<dbReference type="UniPathway" id="UPA00035">
    <property type="reaction ID" value="UER00044"/>
</dbReference>
<dbReference type="GO" id="GO:0005737">
    <property type="term" value="C:cytoplasm"/>
    <property type="evidence" value="ECO:0007669"/>
    <property type="project" value="TreeGrafter"/>
</dbReference>
<dbReference type="GO" id="GO:0004834">
    <property type="term" value="F:tryptophan synthase activity"/>
    <property type="evidence" value="ECO:0007669"/>
    <property type="project" value="UniProtKB-UniRule"/>
</dbReference>
<dbReference type="CDD" id="cd06446">
    <property type="entry name" value="Trp-synth_B"/>
    <property type="match status" value="1"/>
</dbReference>
<dbReference type="FunFam" id="3.40.50.1100:FF:000004">
    <property type="entry name" value="Tryptophan synthase beta chain"/>
    <property type="match status" value="1"/>
</dbReference>
<dbReference type="Gene3D" id="3.40.50.1100">
    <property type="match status" value="2"/>
</dbReference>
<dbReference type="HAMAP" id="MF_00133">
    <property type="entry name" value="Trp_synth_beta"/>
    <property type="match status" value="1"/>
</dbReference>
<dbReference type="InterPro" id="IPR006653">
    <property type="entry name" value="Trp_synth_b_CS"/>
</dbReference>
<dbReference type="InterPro" id="IPR006654">
    <property type="entry name" value="Trp_synth_beta"/>
</dbReference>
<dbReference type="InterPro" id="IPR023026">
    <property type="entry name" value="Trp_synth_beta/beta-like"/>
</dbReference>
<dbReference type="InterPro" id="IPR001926">
    <property type="entry name" value="TrpB-like_PALP"/>
</dbReference>
<dbReference type="InterPro" id="IPR036052">
    <property type="entry name" value="TrpB-like_PALP_sf"/>
</dbReference>
<dbReference type="NCBIfam" id="TIGR00263">
    <property type="entry name" value="trpB"/>
    <property type="match status" value="1"/>
</dbReference>
<dbReference type="PANTHER" id="PTHR48077:SF3">
    <property type="entry name" value="TRYPTOPHAN SYNTHASE"/>
    <property type="match status" value="1"/>
</dbReference>
<dbReference type="PANTHER" id="PTHR48077">
    <property type="entry name" value="TRYPTOPHAN SYNTHASE-RELATED"/>
    <property type="match status" value="1"/>
</dbReference>
<dbReference type="Pfam" id="PF00291">
    <property type="entry name" value="PALP"/>
    <property type="match status" value="1"/>
</dbReference>
<dbReference type="PIRSF" id="PIRSF001413">
    <property type="entry name" value="Trp_syn_beta"/>
    <property type="match status" value="1"/>
</dbReference>
<dbReference type="SUPFAM" id="SSF53686">
    <property type="entry name" value="Tryptophan synthase beta subunit-like PLP-dependent enzymes"/>
    <property type="match status" value="1"/>
</dbReference>
<dbReference type="PROSITE" id="PS00168">
    <property type="entry name" value="TRP_SYNTHASE_BETA"/>
    <property type="match status" value="1"/>
</dbReference>
<evidence type="ECO:0000255" key="1">
    <source>
        <dbReference type="HAMAP-Rule" id="MF_00133"/>
    </source>
</evidence>
<organism>
    <name type="scientific">Lacticaseibacillus casei (strain BL23)</name>
    <name type="common">Lactobacillus casei</name>
    <dbReference type="NCBI Taxonomy" id="543734"/>
    <lineage>
        <taxon>Bacteria</taxon>
        <taxon>Bacillati</taxon>
        <taxon>Bacillota</taxon>
        <taxon>Bacilli</taxon>
        <taxon>Lactobacillales</taxon>
        <taxon>Lactobacillaceae</taxon>
        <taxon>Lacticaseibacillus</taxon>
    </lineage>
</organism>
<comment type="function">
    <text evidence="1">The beta subunit is responsible for the synthesis of L-tryptophan from indole and L-serine.</text>
</comment>
<comment type="catalytic activity">
    <reaction evidence="1">
        <text>(1S,2R)-1-C-(indol-3-yl)glycerol 3-phosphate + L-serine = D-glyceraldehyde 3-phosphate + L-tryptophan + H2O</text>
        <dbReference type="Rhea" id="RHEA:10532"/>
        <dbReference type="ChEBI" id="CHEBI:15377"/>
        <dbReference type="ChEBI" id="CHEBI:33384"/>
        <dbReference type="ChEBI" id="CHEBI:57912"/>
        <dbReference type="ChEBI" id="CHEBI:58866"/>
        <dbReference type="ChEBI" id="CHEBI:59776"/>
        <dbReference type="EC" id="4.2.1.20"/>
    </reaction>
</comment>
<comment type="cofactor">
    <cofactor evidence="1">
        <name>pyridoxal 5'-phosphate</name>
        <dbReference type="ChEBI" id="CHEBI:597326"/>
    </cofactor>
</comment>
<comment type="pathway">
    <text evidence="1">Amino-acid biosynthesis; L-tryptophan biosynthesis; L-tryptophan from chorismate: step 5/5.</text>
</comment>
<comment type="subunit">
    <text evidence="1">Tetramer of two alpha and two beta chains.</text>
</comment>
<comment type="similarity">
    <text evidence="1">Belongs to the TrpB family.</text>
</comment>
<feature type="chain" id="PRO_1000095794" description="Tryptophan synthase beta chain">
    <location>
        <begin position="1"/>
        <end position="406"/>
    </location>
</feature>
<feature type="modified residue" description="N6-(pyridoxal phosphate)lysine" evidence="1">
    <location>
        <position position="97"/>
    </location>
</feature>
<protein>
    <recommendedName>
        <fullName evidence="1">Tryptophan synthase beta chain</fullName>
        <ecNumber evidence="1">4.2.1.20</ecNumber>
    </recommendedName>
</protein>
<sequence>MKTLNETTQQSTRAGRYGKDFGGQYIPETLMTELEKVTKAFNDLKDNPEFKAELNDLLVNYANRPSLLYYAKNMTEDLGGAKIYLKREDLNHTGAHKINNVIGQALLAKHLGKKRLIAETGAGQHGVATATIAALMGMDCEIFMGKEDTDRQKLNVYRMELLGAKVHPVTSGSMVLKDAVNATLQEWASRSDDTFYVLGSAVGPAPFPEMVKHFQSVISTESKQQLQAKETRLPDMVVACVGGGSNAIGSFAAYIDDPSVQLVGVEAAGKGVDTDRTAATIERGSVGIFHGMKSLFMQNEDGQIDPVYSISAGLDYPGVGPEHAALAQEGRAQYVGITDDEAVEAFTYIAKQEGIVAAIESCHAIAYVEKIAPQMAKDQIIICTLSGRGDKDVASIAKYKGVDVDE</sequence>
<reference key="1">
    <citation type="submission" date="2008-06" db="EMBL/GenBank/DDBJ databases">
        <title>Lactobacillus casei BL23 complete genome sequence.</title>
        <authorList>
            <person name="Maze A."/>
            <person name="Boel G."/>
            <person name="Bourand A."/>
            <person name="Loux V."/>
            <person name="Gibrat J.F."/>
            <person name="Zuniga M."/>
            <person name="Hartke A."/>
            <person name="Deutscher J."/>
        </authorList>
    </citation>
    <scope>NUCLEOTIDE SEQUENCE [LARGE SCALE GENOMIC DNA]</scope>
    <source>
        <strain>BL23</strain>
    </source>
</reference>
<name>TRPB_LACCB</name>
<gene>
    <name evidence="1" type="primary">trpB</name>
    <name type="ordered locus">LCABL_00730</name>
</gene>
<accession>B3W6W6</accession>
<proteinExistence type="inferred from homology"/>